<name>TRRAP_DANRE</name>
<comment type="function">
    <text evidence="1 7">Adapter protein, which is found in various multiprotein chromatin complexes with histone acetyltransferase activity (HAT), which gives a specific tag for epigenetic transcription activation. May be required for the mitotic checkpoint and normal cell cycle progression (By similarity). May play a role in the formation and maintenance of the auditory system (PubMed:31231791).</text>
</comment>
<comment type="subcellular location">
    <subcellularLocation>
        <location evidence="1">Nucleus</location>
    </subcellularLocation>
</comment>
<comment type="disruption phenotype">
    <text evidence="7">Morpholino TRRAP knockdown results in defects in the inner ear. Morphant larvae show reduced lateral line neuromasts, decreased number of hair cells per neuromast, and fewer and thinner stereocilia on the hair cells. In addition, the acoustic startle response is decreased and sound-induced fast escape reflex is impaired.</text>
</comment>
<comment type="similarity">
    <text evidence="8">Belongs to the PI3/PI4-kinase family. TRA1 subfamily.</text>
</comment>
<protein>
    <recommendedName>
        <fullName evidence="9">Transformation/transcription domain-associated protein</fullName>
    </recommendedName>
</protein>
<sequence length="3841" mass="435526">MSFVPTPSPTVVDQTTLMKKYLQFVAALTDNNTPDETKLKMMQEVSENFENVTSSPQYSTFLEHIIPRFLTFLQDGEVQFLQEKPTQQLRKLVLEIIHRIPTNEHLRSHAKNILSVMFRFLEIESEENVLICLRIIIELHKQFRPPISQEIHHFLDFVKQIYKELPKVVARYFENPQVIAENTVPSPEMVGMITSVMVKTAPERDDSETRTHTIIPRGSLSLKVLAELPIIVVLMYQLYKLNIHNVVSEFVPLIMNTIMLQVSPQARQHKLFNKELYADFIAAQIKTLSFLAYIIRIYQDLVGKYSQQMVKGMLQLLSNCPPETAHLRKELLIAAKHILTTDLRSQFIPCMDKLFDESILIGSGYTARETLRPLAYSTLADLVHHVRQNLPLTDLSLAVQLFAKNIDDESLPSSIQTMSCKLLLNLVDCIRSKSEQENGNGRDILMRMLEVFVLKFHTIARYQLVSIFKKCKPQSEMGVVDTGALPGVPATPTVTTPALPPPAPPTPVTPAPPPATSFDRAGEKEDKQTFQVSDCRSLVKTLVCGVKTITWGITSCKAPGEAQFIPNKQLQPKETQIYIKLVKYAMQALDIYQVQIAGNGQTYIRVANCQTVRMKEEKEVLEHFAGVFTMMNPLTFKEIFQTTVPYMVERISKNYALQIVANSFLANLTTSALFATILVEYLLERLPEMGSNVELSNLYLKLFKLVFGSVSLFAAENEQMLKPHLHKIVNSSMELAQSAKEPYNYFLLLRALFRSIGGGSHDLLYQEFLPLLPNLLQGLNMLQSGLHKQHMKDLFVELCLTVPVRLSSLLPYLPMLMDPLVSALNGSQTLVSQGLRTLELCVDNLQPDFLYDHIQPVRAELMQALWRTLRNPAETISHVAYRVLGKFGGSNRKMLKESQKLLYVVTEVQGPSIKAEFTDCKASIQLPMEKAIETALDCLKSANTEPYYRRQAWEVIKCFLVAMTSLEDNKHSLYQLLAHPNFTEKWIPNVIISHRYKAQDTPARRTFEQALTGAFMSAVIKDLRPSALPFVASLIRHYTMVAVAQQCGPFLLPCYQSGSQPSTGMFHSEENGSKGMDPLVLIDAIAICMAYEEKELCKIGEVALAVIFDVASIILGSKERACQLPLFSYIVERLCACCYEQAWYAKLGGVVSIKFLMERLPLIWVLQNQLTFLKALLFVMMDLTGEVSNGAVAMAKTTLEQLLIRCATPLKDEEKTEELLSAQDKSFHLVTHDLVREVTSPNSTVRKQAMHSLQVLAQVTGKSVTIIMEPHKEVLQDMVPPKKHLLRHQPANAQIGLMEGNTFCTTLQPRLFTMDLNVMEHKVFYTELLNLCEAEDAALMKLPCYKSLPSLVPLRIAALNALAACNYLPQSREKIIAALFKALNSTNSELQEAGEACMGKFLEGATIEVDQIHTHMRPLLMMLGDYRSLTLNVVNRLTSVTRLFPNSFNDKFCDQMMQHLRKWMEVVVITHKGGQRGDGSPAMEGVEEMRICSAIINLFHLIPAAPQTLVKPLLEVVMKTERAMLIEAGSPFREPLIKFLTRHPSQTVELFMMEATLNDPQWSRMFMSFLKHKDAKPLRDVLASNPNRFVPLLVPAGSAATVRPGSPSTSTARLDLQFQAIKIISIIVKNDEGWLAGQHSLVSQLRRVWVSEAFQERHRKDNMAATNWKEPKLLAFCLLSYCKRNYSEIELLFQLLRAFTGRFLCNMTFLKEYMEEEIPKNYGITHKRALFFRFVEFNDPHFNDELKAKVLQHILNPAFLYSFEKGEGEQLLGPPNPEGDNPESITSVFITKVLDPEKQADLADSLRIYLLQFSTLLVEHAPHHIHDNNKSRNSKLRRLMTFAWPCLLPKTCVDPACKYSGHLLLAHIIAKFAIHKKIVLQVFHSLLKAHTMEARAIVRQAMAILTPAVPARMEDGHQMLTHWTRKIIVEEGHTVPQLVHILHLIVQHFRVYYPVRHHLVQHMISAMQRLGFTPSVTIEQRKLAVDLAEVVIKWELQRIKDQQPESEADPGSVGEGTSGASAAMKRGMSVDSAQDVKRFRTAAGAVGTVFGRSQSIPGTEALLTKPVEKQHTDTVVNFLIRIACQVNDSTNVAGSPGELLSRRCVNLMKTALRPDMWPSSELKLQWFDKLLMTVEQPNQANFSNICTGLEILCFLLSVLQPPAILSHFKPLQRGIAACMTCGNTKVLRAVHSLLSRLMSTFPTEPSTSSVASKYEELECLYAAVGKVIYEGLTNYEKASSANPTQLFGTLMILKSACSNNSSYIDRLISVFMRSLQKMVREHLSPQPNPGAAETSTVTSELVMLSLDLVKMRLSVMNMEMRKNFIQVILTSLIEKSPDPKILRAVVKIVEEWVKNSGNPMATNQVPNPREKSILLVKMMTYIEKRFPDDLELNAQFLDLVNYVYRDDNLSGSDITSKLEPAFLSGLRCTQPLIRAKFFEVFDASMKRRVYERLLYICCSQNWESMGSHFWIKQCTELLLAVCERNTTIGTSCQGSMLPSITNVINLADSHDRAAFAMATHIKQEPRERENSETKEEDVEIDIELAPGDQTSLPKTKEQAERDAGNQLHMLTNRHDKFLDSLREVKTGALLNALVQLCHISTPLAEKTWVQLFPRLWKILSDRQQHALSGEMGPFLCSGSHQAQRDCQPSALNCFVEAMSQCVPPIPIRPCVLKYLGKTHNLWLRSTLMLEQQAFEKGLNLHIKPKQSTEFYEQESITPPQQEILDSLAELYSLLQEEDMWAGLWQKRCKFPETSTAIAYEQHGFFEQAQETYEKAMEKARKEHNVSPAIFPEYQLWEDHWIRCSKELNQWEPLTEYGQSKGHNNPYLVLECAWRVSNWAAMKEALVQVELSCPKEMAWKVNMHRGYLAICHPEEQQLNFIERLVEMASSLAIREWRRLPHIVSHVHTPLLQAAQQIIELQEAAQINAGLQPANLGRNTSLHDMKTVVKTWRNRLPIVSDDLSHWSSIFMWRQHHYQAIVTAYENNTQHDPNTNNAMLGVHASASAIIQYGKIARKQGLVNVALDILSRIHTIPTVPIVDCFQKIRQQVKCYLQLAGVMGKNECMQGLEVIESTNLKYFTKEMTAEFYALKGMFLAQINKSEEANKAFSAAVQMHDVLVKAWAMWGDYLENIFVKDRQPHLGVSSITCYLHACRHQNESKSRKYLAKVLWLLSFDDKNTLADAVDKYCIGVPPIQWLAWIPQLLTCLVGSEGKPLLNLISQVGRVYPQAVYFPIRTLYLTLKIEQRERYKSDSGQQQPSSAAAQTHSASDPGPIRATAPMWRCSRIMHMQRELHPTLLSSLEGIVDQMVWFRENWHEEVLRQLQQGLAKCYSVAFEKSGAVSDAKITPHTLNFVKKLVSTFGVGLENVSNVSTMFSSAASESLARRAQATAQDPVFQKMKGQFTTDFDFSVPGSMKLHNLISKLKKWIKILEAKTKQLPKFFLIEEKCRFLSNFSAQTAEVEIPGEFLMPKPTHYYIKIARFMPRVEIVQKHNTAARRLYIRGHNGKIYPYLVMNDACLTESRREERVLQLLRLLNPCLEKRKETTKRHLFFTVPRVVAVSPQMRLVEDNPSSLSLVEIYKQRCAKKGIEHDNPISRYYDRLATVQARGTQASHQVLRDILKEVQGNMVPRSMLKEWALHTFPNATDYWTFRKMFTIQLALIGLAEFMLHLNRLNPEMLQIAQDTGKLNVSYFRFDINDATGDLDANRPVPFRLTPNISEFLTTIGVSGPLTASMIAVARCFAQPNFKVDGILKAVLRDEIIAWHKKTQEDTSMPLSPAGQPENMDSQQLVSLVQKAVTAIMTRLHNLAQFEGGESKVNTLVAAANSLDNLCRMDPAWHPWL</sequence>
<gene>
    <name evidence="9" type="primary">trrap</name>
</gene>
<feature type="chain" id="PRO_0000451069" description="Transformation/transcription domain-associated protein">
    <location>
        <begin position="1"/>
        <end position="3841"/>
    </location>
</feature>
<feature type="domain" description="FAT" evidence="4">
    <location>
        <begin position="2671"/>
        <end position="3239"/>
    </location>
</feature>
<feature type="domain" description="PI3K/PI4K catalytic" evidence="3">
    <location>
        <begin position="3482"/>
        <end position="3805"/>
    </location>
</feature>
<feature type="domain" description="FATC" evidence="5">
    <location>
        <begin position="3809"/>
        <end position="3841"/>
    </location>
</feature>
<feature type="region of interest" description="Disordered" evidence="6">
    <location>
        <begin position="491"/>
        <end position="516"/>
    </location>
</feature>
<feature type="region of interest" description="Disordered" evidence="6">
    <location>
        <begin position="2002"/>
        <end position="2027"/>
    </location>
</feature>
<feature type="region of interest" description="Disordered" evidence="6">
    <location>
        <begin position="3249"/>
        <end position="3271"/>
    </location>
</feature>
<feature type="region of interest" description="G-loop" evidence="3">
    <location>
        <begin position="3488"/>
        <end position="3494"/>
    </location>
</feature>
<feature type="region of interest" description="Catalytic loop" evidence="3">
    <location>
        <begin position="3669"/>
        <end position="3677"/>
    </location>
</feature>
<feature type="region of interest" description="Activation loop" evidence="3">
    <location>
        <begin position="3689"/>
        <end position="3714"/>
    </location>
</feature>
<feature type="short sequence motif" description="Bipartite nuclear localization signal" evidence="2">
    <location>
        <begin position="2025"/>
        <end position="2040"/>
    </location>
</feature>
<feature type="compositionally biased region" description="Pro residues" evidence="6">
    <location>
        <begin position="498"/>
        <end position="515"/>
    </location>
</feature>
<feature type="compositionally biased region" description="Low complexity" evidence="6">
    <location>
        <begin position="3251"/>
        <end position="3268"/>
    </location>
</feature>
<organism>
    <name type="scientific">Danio rerio</name>
    <name type="common">Zebrafish</name>
    <name type="synonym">Brachydanio rerio</name>
    <dbReference type="NCBI Taxonomy" id="7955"/>
    <lineage>
        <taxon>Eukaryota</taxon>
        <taxon>Metazoa</taxon>
        <taxon>Chordata</taxon>
        <taxon>Craniata</taxon>
        <taxon>Vertebrata</taxon>
        <taxon>Euteleostomi</taxon>
        <taxon>Actinopterygii</taxon>
        <taxon>Neopterygii</taxon>
        <taxon>Teleostei</taxon>
        <taxon>Ostariophysi</taxon>
        <taxon>Cypriniformes</taxon>
        <taxon>Danionidae</taxon>
        <taxon>Danioninae</taxon>
        <taxon>Danio</taxon>
    </lineage>
</organism>
<accession>A0A0R4ITC5</accession>
<proteinExistence type="inferred from homology"/>
<reference key="1">
    <citation type="journal article" date="2013" name="Nature">
        <title>The zebrafish reference genome sequence and its relationship to the human genome.</title>
        <authorList>
            <person name="Howe K."/>
            <person name="Clark M.D."/>
            <person name="Torroja C.F."/>
            <person name="Torrance J."/>
            <person name="Berthelot C."/>
            <person name="Muffato M."/>
            <person name="Collins J.E."/>
            <person name="Humphray S."/>
            <person name="McLaren K."/>
            <person name="Matthews L."/>
            <person name="McLaren S."/>
            <person name="Sealy I."/>
            <person name="Caccamo M."/>
            <person name="Churcher C."/>
            <person name="Scott C."/>
            <person name="Barrett J.C."/>
            <person name="Koch R."/>
            <person name="Rauch G.J."/>
            <person name="White S."/>
            <person name="Chow W."/>
            <person name="Kilian B."/>
            <person name="Quintais L.T."/>
            <person name="Guerra-Assuncao J.A."/>
            <person name="Zhou Y."/>
            <person name="Gu Y."/>
            <person name="Yen J."/>
            <person name="Vogel J.H."/>
            <person name="Eyre T."/>
            <person name="Redmond S."/>
            <person name="Banerjee R."/>
            <person name="Chi J."/>
            <person name="Fu B."/>
            <person name="Langley E."/>
            <person name="Maguire S.F."/>
            <person name="Laird G.K."/>
            <person name="Lloyd D."/>
            <person name="Kenyon E."/>
            <person name="Donaldson S."/>
            <person name="Sehra H."/>
            <person name="Almeida-King J."/>
            <person name="Loveland J."/>
            <person name="Trevanion S."/>
            <person name="Jones M."/>
            <person name="Quail M."/>
            <person name="Willey D."/>
            <person name="Hunt A."/>
            <person name="Burton J."/>
            <person name="Sims S."/>
            <person name="McLay K."/>
            <person name="Plumb B."/>
            <person name="Davis J."/>
            <person name="Clee C."/>
            <person name="Oliver K."/>
            <person name="Clark R."/>
            <person name="Riddle C."/>
            <person name="Elliot D."/>
            <person name="Threadgold G."/>
            <person name="Harden G."/>
            <person name="Ware D."/>
            <person name="Begum S."/>
            <person name="Mortimore B."/>
            <person name="Kerry G."/>
            <person name="Heath P."/>
            <person name="Phillimore B."/>
            <person name="Tracey A."/>
            <person name="Corby N."/>
            <person name="Dunn M."/>
            <person name="Johnson C."/>
            <person name="Wood J."/>
            <person name="Clark S."/>
            <person name="Pelan S."/>
            <person name="Griffiths G."/>
            <person name="Smith M."/>
            <person name="Glithero R."/>
            <person name="Howden P."/>
            <person name="Barker N."/>
            <person name="Lloyd C."/>
            <person name="Stevens C."/>
            <person name="Harley J."/>
            <person name="Holt K."/>
            <person name="Panagiotidis G."/>
            <person name="Lovell J."/>
            <person name="Beasley H."/>
            <person name="Henderson C."/>
            <person name="Gordon D."/>
            <person name="Auger K."/>
            <person name="Wright D."/>
            <person name="Collins J."/>
            <person name="Raisen C."/>
            <person name="Dyer L."/>
            <person name="Leung K."/>
            <person name="Robertson L."/>
            <person name="Ambridge K."/>
            <person name="Leongamornlert D."/>
            <person name="McGuire S."/>
            <person name="Gilderthorp R."/>
            <person name="Griffiths C."/>
            <person name="Manthravadi D."/>
            <person name="Nichol S."/>
            <person name="Barker G."/>
            <person name="Whitehead S."/>
            <person name="Kay M."/>
            <person name="Brown J."/>
            <person name="Murnane C."/>
            <person name="Gray E."/>
            <person name="Humphries M."/>
            <person name="Sycamore N."/>
            <person name="Barker D."/>
            <person name="Saunders D."/>
            <person name="Wallis J."/>
            <person name="Babbage A."/>
            <person name="Hammond S."/>
            <person name="Mashreghi-Mohammadi M."/>
            <person name="Barr L."/>
            <person name="Martin S."/>
            <person name="Wray P."/>
            <person name="Ellington A."/>
            <person name="Matthews N."/>
            <person name="Ellwood M."/>
            <person name="Woodmansey R."/>
            <person name="Clark G."/>
            <person name="Cooper J."/>
            <person name="Tromans A."/>
            <person name="Grafham D."/>
            <person name="Skuce C."/>
            <person name="Pandian R."/>
            <person name="Andrews R."/>
            <person name="Harrison E."/>
            <person name="Kimberley A."/>
            <person name="Garnett J."/>
            <person name="Fosker N."/>
            <person name="Hall R."/>
            <person name="Garner P."/>
            <person name="Kelly D."/>
            <person name="Bird C."/>
            <person name="Palmer S."/>
            <person name="Gehring I."/>
            <person name="Berger A."/>
            <person name="Dooley C.M."/>
            <person name="Ersan-Urun Z."/>
            <person name="Eser C."/>
            <person name="Geiger H."/>
            <person name="Geisler M."/>
            <person name="Karotki L."/>
            <person name="Kirn A."/>
            <person name="Konantz J."/>
            <person name="Konantz M."/>
            <person name="Oberlander M."/>
            <person name="Rudolph-Geiger S."/>
            <person name="Teucke M."/>
            <person name="Lanz C."/>
            <person name="Raddatz G."/>
            <person name="Osoegawa K."/>
            <person name="Zhu B."/>
            <person name="Rapp A."/>
            <person name="Widaa S."/>
            <person name="Langford C."/>
            <person name="Yang F."/>
            <person name="Schuster S.C."/>
            <person name="Carter N.P."/>
            <person name="Harrow J."/>
            <person name="Ning Z."/>
            <person name="Herrero J."/>
            <person name="Searle S.M."/>
            <person name="Enright A."/>
            <person name="Geisler R."/>
            <person name="Plasterk R.H."/>
            <person name="Lee C."/>
            <person name="Westerfield M."/>
            <person name="de Jong P.J."/>
            <person name="Zon L.I."/>
            <person name="Postlethwait J.H."/>
            <person name="Nusslein-Volhard C."/>
            <person name="Hubbard T.J."/>
            <person name="Roest Crollius H."/>
            <person name="Rogers J."/>
            <person name="Stemple D.L."/>
        </authorList>
    </citation>
    <scope>NUCLEOTIDE SEQUENCE [LARGE SCALE GENOMIC DNA]</scope>
    <source>
        <strain>Tuebingen</strain>
    </source>
</reference>
<reference key="2">
    <citation type="journal article" date="2019" name="Clin. Genet.">
        <title>Novel TRRAP mutation causes autosomal dominant non-syndromic hearing loss.</title>
        <authorList>
            <person name="Xia W."/>
            <person name="Hu J."/>
            <person name="Ma J."/>
            <person name="Huang J."/>
            <person name="Wang X."/>
            <person name="Jiang N."/>
            <person name="Zhang J."/>
            <person name="Ma Z."/>
            <person name="Ma D."/>
        </authorList>
    </citation>
    <scope>FUNCTION</scope>
    <scope>DISRUPTION PHENOTYPE</scope>
</reference>
<dbReference type="EMBL" id="BX005075">
    <property type="status" value="NOT_ANNOTATED_CDS"/>
    <property type="molecule type" value="Genomic_DNA"/>
</dbReference>
<dbReference type="EMBL" id="BX571829">
    <property type="status" value="NOT_ANNOTATED_CDS"/>
    <property type="molecule type" value="Genomic_DNA"/>
</dbReference>
<dbReference type="EMBL" id="FO082787">
    <property type="status" value="NOT_ANNOTATED_CDS"/>
    <property type="molecule type" value="Genomic_DNA"/>
</dbReference>
<dbReference type="RefSeq" id="XP_009304957.1">
    <property type="nucleotide sequence ID" value="XM_009306682.4"/>
</dbReference>
<dbReference type="SMR" id="A0A0R4ITC5"/>
<dbReference type="FunCoup" id="A0A0R4ITC5">
    <property type="interactions" value="1316"/>
</dbReference>
<dbReference type="STRING" id="7955.ENSDARP00000137625"/>
<dbReference type="PaxDb" id="7955-ENSDARP00000110252"/>
<dbReference type="Ensembl" id="ENSDART00000160586">
    <property type="protein sequence ID" value="ENSDARP00000137625"/>
    <property type="gene ID" value="ENSDARG00000100623"/>
</dbReference>
<dbReference type="GeneID" id="557263"/>
<dbReference type="AGR" id="ZFIN:ZDB-GENE-050809-47"/>
<dbReference type="CTD" id="8295"/>
<dbReference type="ZFIN" id="ZDB-GENE-050809-47">
    <property type="gene designation" value="trrap"/>
</dbReference>
<dbReference type="InParanoid" id="A0A0R4ITC5"/>
<dbReference type="OMA" id="CLDLYGQ"/>
<dbReference type="OrthoDB" id="5570127at2759"/>
<dbReference type="Reactome" id="R-DRE-201722">
    <property type="pathway name" value="Formation of the beta-catenin:TCF transactivating complex"/>
</dbReference>
<dbReference type="Reactome" id="R-DRE-5689880">
    <property type="pathway name" value="Ub-specific processing proteases"/>
</dbReference>
<dbReference type="PRO" id="PR:A0A0R4ITC5"/>
<dbReference type="Proteomes" id="UP000000437">
    <property type="component" value="Chromosome 12"/>
</dbReference>
<dbReference type="Bgee" id="ENSDARG00000100623">
    <property type="expression patterns" value="Expressed in presomitic mesoderm and 26 other cell types or tissues"/>
</dbReference>
<dbReference type="ExpressionAtlas" id="A0A0R4ITC5">
    <property type="expression patterns" value="baseline and differential"/>
</dbReference>
<dbReference type="GO" id="GO:0035267">
    <property type="term" value="C:NuA4 histone acetyltransferase complex"/>
    <property type="evidence" value="ECO:0000318"/>
    <property type="project" value="GO_Central"/>
</dbReference>
<dbReference type="GO" id="GO:0005634">
    <property type="term" value="C:nucleus"/>
    <property type="evidence" value="ECO:0000318"/>
    <property type="project" value="GO_Central"/>
</dbReference>
<dbReference type="GO" id="GO:0000124">
    <property type="term" value="C:SAGA complex"/>
    <property type="evidence" value="ECO:0000318"/>
    <property type="project" value="GO_Central"/>
</dbReference>
<dbReference type="GO" id="GO:0060536">
    <property type="term" value="P:cartilage morphogenesis"/>
    <property type="evidence" value="ECO:0000315"/>
    <property type="project" value="ZFIN"/>
</dbReference>
<dbReference type="GO" id="GO:0140861">
    <property type="term" value="P:DNA repair-dependent chromatin remodeling"/>
    <property type="evidence" value="ECO:0000318"/>
    <property type="project" value="GO_Central"/>
</dbReference>
<dbReference type="GO" id="GO:0035675">
    <property type="term" value="P:neuromast hair cell development"/>
    <property type="evidence" value="ECO:0000315"/>
    <property type="project" value="UniProtKB"/>
</dbReference>
<dbReference type="GO" id="GO:0006355">
    <property type="term" value="P:regulation of DNA-templated transcription"/>
    <property type="evidence" value="ECO:0000318"/>
    <property type="project" value="GO_Central"/>
</dbReference>
<dbReference type="GO" id="GO:0042481">
    <property type="term" value="P:regulation of odontogenesis"/>
    <property type="evidence" value="ECO:0000315"/>
    <property type="project" value="ZFIN"/>
</dbReference>
<dbReference type="GO" id="GO:0001964">
    <property type="term" value="P:startle response"/>
    <property type="evidence" value="ECO:0000315"/>
    <property type="project" value="ZFIN"/>
</dbReference>
<dbReference type="CDD" id="cd05163">
    <property type="entry name" value="PIKK_TRRAP"/>
    <property type="match status" value="1"/>
</dbReference>
<dbReference type="Gene3D" id="1.25.10.10">
    <property type="entry name" value="Leucine-rich Repeat Variant"/>
    <property type="match status" value="1"/>
</dbReference>
<dbReference type="InterPro" id="IPR011989">
    <property type="entry name" value="ARM-like"/>
</dbReference>
<dbReference type="InterPro" id="IPR016024">
    <property type="entry name" value="ARM-type_fold"/>
</dbReference>
<dbReference type="InterPro" id="IPR050517">
    <property type="entry name" value="DDR_Repair_Kinase"/>
</dbReference>
<dbReference type="InterPro" id="IPR003152">
    <property type="entry name" value="FATC_dom"/>
</dbReference>
<dbReference type="InterPro" id="IPR011009">
    <property type="entry name" value="Kinase-like_dom_sf"/>
</dbReference>
<dbReference type="InterPro" id="IPR000403">
    <property type="entry name" value="PI3/4_kinase_cat_dom"/>
</dbReference>
<dbReference type="InterPro" id="IPR003151">
    <property type="entry name" value="PIK-rel_kinase_FAT"/>
</dbReference>
<dbReference type="InterPro" id="IPR014009">
    <property type="entry name" value="PIK_FAT"/>
</dbReference>
<dbReference type="InterPro" id="IPR046807">
    <property type="entry name" value="Tra1_central"/>
</dbReference>
<dbReference type="InterPro" id="IPR046805">
    <property type="entry name" value="Tra1_ring"/>
</dbReference>
<dbReference type="PANTHER" id="PTHR11139">
    <property type="entry name" value="ATAXIA TELANGIECTASIA MUTATED ATM -RELATED"/>
    <property type="match status" value="1"/>
</dbReference>
<dbReference type="PANTHER" id="PTHR11139:SF1">
    <property type="entry name" value="TRANSFORMATION_TRANSCRIPTION DOMAIN-ASSOCIATED PROTEIN"/>
    <property type="match status" value="1"/>
</dbReference>
<dbReference type="Pfam" id="PF02259">
    <property type="entry name" value="FAT"/>
    <property type="match status" value="1"/>
</dbReference>
<dbReference type="Pfam" id="PF00454">
    <property type="entry name" value="PI3_PI4_kinase"/>
    <property type="match status" value="1"/>
</dbReference>
<dbReference type="Pfam" id="PF20175">
    <property type="entry name" value="Tra1_central"/>
    <property type="match status" value="1"/>
</dbReference>
<dbReference type="Pfam" id="PF20206">
    <property type="entry name" value="Tra1_ring"/>
    <property type="match status" value="1"/>
</dbReference>
<dbReference type="SMART" id="SM01343">
    <property type="entry name" value="FATC"/>
    <property type="match status" value="1"/>
</dbReference>
<dbReference type="SMART" id="SM00146">
    <property type="entry name" value="PI3Kc"/>
    <property type="match status" value="1"/>
</dbReference>
<dbReference type="SUPFAM" id="SSF48371">
    <property type="entry name" value="ARM repeat"/>
    <property type="match status" value="3"/>
</dbReference>
<dbReference type="SUPFAM" id="SSF56112">
    <property type="entry name" value="Protein kinase-like (PK-like)"/>
    <property type="match status" value="1"/>
</dbReference>
<dbReference type="PROSITE" id="PS51189">
    <property type="entry name" value="FAT"/>
    <property type="match status" value="1"/>
</dbReference>
<dbReference type="PROSITE" id="PS51190">
    <property type="entry name" value="FATC"/>
    <property type="match status" value="1"/>
</dbReference>
<dbReference type="PROSITE" id="PS50290">
    <property type="entry name" value="PI3_4_KINASE_3"/>
    <property type="match status" value="1"/>
</dbReference>
<keyword id="KW-0010">Activator</keyword>
<keyword id="KW-0156">Chromatin regulator</keyword>
<keyword id="KW-0539">Nucleus</keyword>
<keyword id="KW-1185">Reference proteome</keyword>
<keyword id="KW-0804">Transcription</keyword>
<keyword id="KW-0805">Transcription regulation</keyword>
<evidence type="ECO:0000250" key="1">
    <source>
        <dbReference type="UniProtKB" id="Q9Y4A5"/>
    </source>
</evidence>
<evidence type="ECO:0000255" key="2"/>
<evidence type="ECO:0000255" key="3">
    <source>
        <dbReference type="PROSITE-ProRule" id="PRU00269"/>
    </source>
</evidence>
<evidence type="ECO:0000255" key="4">
    <source>
        <dbReference type="PROSITE-ProRule" id="PRU00534"/>
    </source>
</evidence>
<evidence type="ECO:0000255" key="5">
    <source>
        <dbReference type="PROSITE-ProRule" id="PRU00535"/>
    </source>
</evidence>
<evidence type="ECO:0000256" key="6">
    <source>
        <dbReference type="SAM" id="MobiDB-lite"/>
    </source>
</evidence>
<evidence type="ECO:0000269" key="7">
    <source>
    </source>
</evidence>
<evidence type="ECO:0000305" key="8"/>
<evidence type="ECO:0000312" key="9">
    <source>
        <dbReference type="ZFIN" id="ZDB-GENE-050809-47"/>
    </source>
</evidence>